<accession>Q9NYW2</accession>
<accession>Q4KN29</accession>
<accession>Q645Y2</accession>
<proteinExistence type="evidence at protein level"/>
<dbReference type="EMBL" id="AF227134">
    <property type="protein sequence ID" value="AAF43907.1"/>
    <property type="molecule type" value="Genomic_DNA"/>
</dbReference>
<dbReference type="EMBL" id="AY724935">
    <property type="protein sequence ID" value="AAU21137.1"/>
    <property type="molecule type" value="Genomic_DNA"/>
</dbReference>
<dbReference type="EMBL" id="BC069084">
    <property type="protein sequence ID" value="AAH69084.1"/>
    <property type="molecule type" value="mRNA"/>
</dbReference>
<dbReference type="EMBL" id="BC069551">
    <property type="protein sequence ID" value="AAH69551.1"/>
    <property type="molecule type" value="mRNA"/>
</dbReference>
<dbReference type="EMBL" id="BC096701">
    <property type="protein sequence ID" value="AAH96701.1"/>
    <property type="molecule type" value="mRNA"/>
</dbReference>
<dbReference type="EMBL" id="BC096735">
    <property type="protein sequence ID" value="AAH96735.1"/>
    <property type="molecule type" value="mRNA"/>
</dbReference>
<dbReference type="EMBL" id="BC098353">
    <property type="protein sequence ID" value="AAH98353.1"/>
    <property type="molecule type" value="mRNA"/>
</dbReference>
<dbReference type="CCDS" id="CCDS8632.1"/>
<dbReference type="RefSeq" id="NP_076407.1">
    <property type="nucleotide sequence ID" value="NM_023918.3"/>
</dbReference>
<dbReference type="SMR" id="Q9NYW2"/>
<dbReference type="BioGRID" id="119146">
    <property type="interactions" value="4"/>
</dbReference>
<dbReference type="FunCoup" id="Q9NYW2">
    <property type="interactions" value="214"/>
</dbReference>
<dbReference type="IntAct" id="Q9NYW2">
    <property type="interactions" value="4"/>
</dbReference>
<dbReference type="STRING" id="9606.ENSP00000240615"/>
<dbReference type="BindingDB" id="Q9NYW2"/>
<dbReference type="ChEMBL" id="CHEMBL3988599"/>
<dbReference type="DrugCentral" id="Q9NYW2"/>
<dbReference type="GuidetoPHARMACOLOGY" id="664"/>
<dbReference type="GlyCosmos" id="Q9NYW2">
    <property type="glycosylation" value="1 site, No reported glycans"/>
</dbReference>
<dbReference type="GlyGen" id="Q9NYW2">
    <property type="glycosylation" value="1 site, 1 N-linked glycan (1 site)"/>
</dbReference>
<dbReference type="iPTMnet" id="Q9NYW2"/>
<dbReference type="PhosphoSitePlus" id="Q9NYW2"/>
<dbReference type="BioMuta" id="TAS2R8"/>
<dbReference type="DMDM" id="29839662"/>
<dbReference type="MassIVE" id="Q9NYW2"/>
<dbReference type="PaxDb" id="9606-ENSP00000240615"/>
<dbReference type="Antibodypedia" id="23396">
    <property type="antibodies" value="42 antibodies from 15 providers"/>
</dbReference>
<dbReference type="DNASU" id="50836"/>
<dbReference type="Ensembl" id="ENST00000240615.3">
    <property type="protein sequence ID" value="ENSP00000240615.2"/>
    <property type="gene ID" value="ENSG00000121314.3"/>
</dbReference>
<dbReference type="Ensembl" id="ENST00000572823.1">
    <property type="protein sequence ID" value="ENSP00000461158.1"/>
    <property type="gene ID" value="ENSG00000272712.1"/>
</dbReference>
<dbReference type="Ensembl" id="ENST00000610444.2">
    <property type="protein sequence ID" value="ENSP00000484163.1"/>
    <property type="gene ID" value="ENSG00000277316.2"/>
</dbReference>
<dbReference type="GeneID" id="50836"/>
<dbReference type="KEGG" id="hsa:50836"/>
<dbReference type="MANE-Select" id="ENST00000240615.3">
    <property type="protein sequence ID" value="ENSP00000240615.2"/>
    <property type="RefSeq nucleotide sequence ID" value="NM_023918.3"/>
    <property type="RefSeq protein sequence ID" value="NP_076407.1"/>
</dbReference>
<dbReference type="UCSC" id="uc010shh.3">
    <property type="organism name" value="human"/>
</dbReference>
<dbReference type="AGR" id="HGNC:14915"/>
<dbReference type="CTD" id="50836"/>
<dbReference type="DisGeNET" id="50836"/>
<dbReference type="GeneCards" id="TAS2R8"/>
<dbReference type="HGNC" id="HGNC:14915">
    <property type="gene designation" value="TAS2R8"/>
</dbReference>
<dbReference type="HPA" id="ENSG00000121314">
    <property type="expression patterns" value="Not detected"/>
</dbReference>
<dbReference type="MIM" id="604794">
    <property type="type" value="gene"/>
</dbReference>
<dbReference type="neXtProt" id="NX_Q9NYW2"/>
<dbReference type="OpenTargets" id="ENSG00000121314"/>
<dbReference type="PharmGKB" id="PA37926"/>
<dbReference type="VEuPathDB" id="HostDB:ENSG00000121314"/>
<dbReference type="eggNOG" id="ENOG502SKRK">
    <property type="taxonomic scope" value="Eukaryota"/>
</dbReference>
<dbReference type="GeneTree" id="ENSGT01100000263477"/>
<dbReference type="HOGENOM" id="CLU_072337_3_0_1"/>
<dbReference type="InParanoid" id="Q9NYW2"/>
<dbReference type="OMA" id="NWIDWIK"/>
<dbReference type="OrthoDB" id="8876749at2759"/>
<dbReference type="PAN-GO" id="Q9NYW2">
    <property type="GO annotations" value="3 GO annotations based on evolutionary models"/>
</dbReference>
<dbReference type="PhylomeDB" id="Q9NYW2"/>
<dbReference type="TreeFam" id="TF335891"/>
<dbReference type="PathwayCommons" id="Q9NYW2"/>
<dbReference type="Reactome" id="R-HSA-418594">
    <property type="pathway name" value="G alpha (i) signalling events"/>
</dbReference>
<dbReference type="Reactome" id="R-HSA-420499">
    <property type="pathway name" value="Class C/3 (Metabotropic glutamate/pheromone receptors)"/>
</dbReference>
<dbReference type="Reactome" id="R-HSA-9717207">
    <property type="pathway name" value="Sensory perception of sweet, bitter, and umami (glutamate) taste"/>
</dbReference>
<dbReference type="SignaLink" id="Q9NYW2"/>
<dbReference type="BioGRID-ORCS" id="50836">
    <property type="hits" value="13 hits in 1137 CRISPR screens"/>
</dbReference>
<dbReference type="GeneWiki" id="TAS2R8"/>
<dbReference type="GenomeRNAi" id="50836"/>
<dbReference type="Pharos" id="Q9NYW2">
    <property type="development level" value="Tchem"/>
</dbReference>
<dbReference type="PRO" id="PR:Q9NYW2"/>
<dbReference type="Proteomes" id="UP000005640">
    <property type="component" value="Chromosome 12"/>
</dbReference>
<dbReference type="RNAct" id="Q9NYW2">
    <property type="molecule type" value="protein"/>
</dbReference>
<dbReference type="Bgee" id="ENSG00000121314">
    <property type="expression patterns" value="Expressed in cortical plate and 6 other cell types or tissues"/>
</dbReference>
<dbReference type="GO" id="GO:0016020">
    <property type="term" value="C:membrane"/>
    <property type="evidence" value="ECO:0000318"/>
    <property type="project" value="GO_Central"/>
</dbReference>
<dbReference type="GO" id="GO:0005886">
    <property type="term" value="C:plasma membrane"/>
    <property type="evidence" value="ECO:0000304"/>
    <property type="project" value="Reactome"/>
</dbReference>
<dbReference type="GO" id="GO:0033038">
    <property type="term" value="F:bitter taste receptor activity"/>
    <property type="evidence" value="ECO:0000314"/>
    <property type="project" value="UniProtKB"/>
</dbReference>
<dbReference type="GO" id="GO:0004930">
    <property type="term" value="F:G protein-coupled receptor activity"/>
    <property type="evidence" value="ECO:0007669"/>
    <property type="project" value="UniProtKB-KW"/>
</dbReference>
<dbReference type="GO" id="GO:0008527">
    <property type="term" value="F:taste receptor activity"/>
    <property type="evidence" value="ECO:0000304"/>
    <property type="project" value="UniProtKB"/>
</dbReference>
<dbReference type="GO" id="GO:0001580">
    <property type="term" value="P:detection of chemical stimulus involved in sensory perception of bitter taste"/>
    <property type="evidence" value="ECO:0000314"/>
    <property type="project" value="UniProtKB"/>
</dbReference>
<dbReference type="CDD" id="cd15022">
    <property type="entry name" value="7tm_TAS2R8"/>
    <property type="match status" value="1"/>
</dbReference>
<dbReference type="FunFam" id="1.20.1070.10:FF:000042">
    <property type="entry name" value="Taste receptor type 2 member 7"/>
    <property type="match status" value="1"/>
</dbReference>
<dbReference type="Gene3D" id="1.20.1070.10">
    <property type="entry name" value="Rhodopsin 7-helix transmembrane proteins"/>
    <property type="match status" value="1"/>
</dbReference>
<dbReference type="InterPro" id="IPR017452">
    <property type="entry name" value="GPCR_Rhodpsn_7TM"/>
</dbReference>
<dbReference type="InterPro" id="IPR007960">
    <property type="entry name" value="TAS2R"/>
</dbReference>
<dbReference type="PANTHER" id="PTHR11394">
    <property type="entry name" value="TASTE RECEPTOR TYPE 2"/>
    <property type="match status" value="1"/>
</dbReference>
<dbReference type="PANTHER" id="PTHR11394:SF31">
    <property type="entry name" value="TASTE RECEPTOR TYPE 2 MEMBER 8"/>
    <property type="match status" value="1"/>
</dbReference>
<dbReference type="Pfam" id="PF05296">
    <property type="entry name" value="TAS2R"/>
    <property type="match status" value="1"/>
</dbReference>
<dbReference type="SUPFAM" id="SSF81321">
    <property type="entry name" value="Family A G protein-coupled receptor-like"/>
    <property type="match status" value="1"/>
</dbReference>
<dbReference type="PROSITE" id="PS50262">
    <property type="entry name" value="G_PROTEIN_RECEP_F1_2"/>
    <property type="match status" value="1"/>
</dbReference>
<organism>
    <name type="scientific">Homo sapiens</name>
    <name type="common">Human</name>
    <dbReference type="NCBI Taxonomy" id="9606"/>
    <lineage>
        <taxon>Eukaryota</taxon>
        <taxon>Metazoa</taxon>
        <taxon>Chordata</taxon>
        <taxon>Craniata</taxon>
        <taxon>Vertebrata</taxon>
        <taxon>Euteleostomi</taxon>
        <taxon>Mammalia</taxon>
        <taxon>Eutheria</taxon>
        <taxon>Euarchontoglires</taxon>
        <taxon>Primates</taxon>
        <taxon>Haplorrhini</taxon>
        <taxon>Catarrhini</taxon>
        <taxon>Hominidae</taxon>
        <taxon>Homo</taxon>
    </lineage>
</organism>
<reference key="1">
    <citation type="journal article" date="2000" name="Cell">
        <title>A novel family of mammalian taste receptors.</title>
        <authorList>
            <person name="Adler E."/>
            <person name="Hoon M.A."/>
            <person name="Mueller K.L."/>
            <person name="Chandrashekar J."/>
            <person name="Ryba N.J.P."/>
            <person name="Zuker C.S."/>
        </authorList>
    </citation>
    <scope>NUCLEOTIDE SEQUENCE [GENOMIC DNA]</scope>
    <scope>TOPOLOGY</scope>
</reference>
<reference key="2">
    <citation type="journal article" date="2005" name="Mol. Biol. Evol.">
        <title>Evolution of bitter taste receptors in humans and apes.</title>
        <authorList>
            <person name="Fischer A."/>
            <person name="Gilad Y."/>
            <person name="Man O."/>
            <person name="Paeaebo S."/>
        </authorList>
    </citation>
    <scope>NUCLEOTIDE SEQUENCE [GENOMIC DNA]</scope>
    <scope>VARIANT VAL-308</scope>
</reference>
<reference key="3">
    <citation type="journal article" date="2004" name="Genome Res.">
        <title>The status, quality, and expansion of the NIH full-length cDNA project: the Mammalian Gene Collection (MGC).</title>
        <authorList>
            <consortium name="The MGC Project Team"/>
        </authorList>
    </citation>
    <scope>NUCLEOTIDE SEQUENCE [LARGE SCALE MRNA]</scope>
</reference>
<reference key="4">
    <citation type="journal article" date="2000" name="Cell">
        <title>T2Rs function as bitter taste receptors.</title>
        <authorList>
            <person name="Chandrashekar J."/>
            <person name="Mueller K.L."/>
            <person name="Hoon M.A."/>
            <person name="Adler E."/>
            <person name="Feng L."/>
            <person name="Guo W."/>
            <person name="Zuker C.S."/>
            <person name="Ryba N.J.P."/>
        </authorList>
    </citation>
    <scope>CHARACTERIZATION</scope>
</reference>
<reference key="5">
    <citation type="journal article" date="2002" name="Curr. Opin. Neurobiol.">
        <title>Receptors for bitter and sweet taste.</title>
        <authorList>
            <person name="Montmayeur J.-P."/>
            <person name="Matsunami H."/>
        </authorList>
    </citation>
    <scope>REVIEW</scope>
</reference>
<reference key="6">
    <citation type="journal article" date="2002" name="J. Biol. Chem.">
        <title>Molecular mechanisms of bitter and sweet taste transduction.</title>
        <authorList>
            <person name="Margolskee R.F."/>
        </authorList>
    </citation>
    <scope>REVIEW</scope>
</reference>
<reference key="7">
    <citation type="journal article" date="2003" name="Cell">
        <title>Coding of sweet, bitter, and umami tastes: different receptor cells sharing similar signaling pathways.</title>
        <authorList>
            <person name="Zhang Y."/>
            <person name="Hoon M.A."/>
            <person name="Chandrashekar J."/>
            <person name="Mueller K.L."/>
            <person name="Cook B."/>
            <person name="Wu D."/>
            <person name="Zuker C.S."/>
            <person name="Ryba N.J."/>
        </authorList>
    </citation>
    <scope>REVIEW</scope>
</reference>
<sequence length="309" mass="35877">MFSPADNIFIILITGEFILGILGNGYIALVNWIDWIKKKKISTVDYILTNLVIARICLISVMVVNGIVIVLNPDVYTKNKQQIVIFTFWTFANYLNMWITTCLNVFYFLKIASSSHPLFLWLKWKIDMVVHWILLGCFAISLLVSLIAAIVLSCDYRFHAIAKHKRNITEMFHVSKIPYFEPLTLFNLFAIVPFIVSLISFFLLVRSLWRHTKQIKLYATGSRDPSTEVHVRAIKTMTSFIFFFFLYYISSILMTFSYLMTKYKLAVEFGEIAAILYPLGHSLILIVLNNKLRQTFVRMLTCRKIACMI</sequence>
<gene>
    <name type="primary">TAS2R8</name>
</gene>
<evidence type="ECO:0000255" key="1"/>
<evidence type="ECO:0000269" key="2">
    <source>
    </source>
</evidence>
<evidence type="ECO:0000305" key="3"/>
<feature type="chain" id="PRO_0000082227" description="Taste receptor type 2 member 8">
    <location>
        <begin position="1"/>
        <end position="309"/>
    </location>
</feature>
<feature type="topological domain" description="Extracellular" evidence="1">
    <location>
        <begin position="1"/>
        <end position="7"/>
    </location>
</feature>
<feature type="transmembrane region" description="Helical; Name=1" evidence="1">
    <location>
        <begin position="8"/>
        <end position="28"/>
    </location>
</feature>
<feature type="topological domain" description="Cytoplasmic" evidence="1">
    <location>
        <begin position="29"/>
        <end position="50"/>
    </location>
</feature>
<feature type="transmembrane region" description="Helical; Name=2" evidence="1">
    <location>
        <begin position="51"/>
        <end position="71"/>
    </location>
</feature>
<feature type="topological domain" description="Extracellular" evidence="1">
    <location>
        <begin position="72"/>
        <end position="82"/>
    </location>
</feature>
<feature type="transmembrane region" description="Helical; Name=3" evidence="1">
    <location>
        <begin position="83"/>
        <end position="103"/>
    </location>
</feature>
<feature type="topological domain" description="Cytoplasmic" evidence="1">
    <location>
        <begin position="104"/>
        <end position="131"/>
    </location>
</feature>
<feature type="transmembrane region" description="Helical; Name=4" evidence="1">
    <location>
        <begin position="132"/>
        <end position="152"/>
    </location>
</feature>
<feature type="topological domain" description="Extracellular" evidence="1">
    <location>
        <begin position="153"/>
        <end position="184"/>
    </location>
</feature>
<feature type="transmembrane region" description="Helical; Name=5" evidence="1">
    <location>
        <begin position="185"/>
        <end position="205"/>
    </location>
</feature>
<feature type="topological domain" description="Cytoplasmic" evidence="1">
    <location>
        <begin position="206"/>
        <end position="239"/>
    </location>
</feature>
<feature type="transmembrane region" description="Helical; Name=6" evidence="1">
    <location>
        <begin position="240"/>
        <end position="260"/>
    </location>
</feature>
<feature type="topological domain" description="Extracellular" evidence="1">
    <location>
        <begin position="261"/>
        <end position="266"/>
    </location>
</feature>
<feature type="transmembrane region" description="Helical; Name=7" evidence="1">
    <location>
        <begin position="267"/>
        <end position="287"/>
    </location>
</feature>
<feature type="topological domain" description="Cytoplasmic" evidence="1">
    <location>
        <begin position="288"/>
        <end position="309"/>
    </location>
</feature>
<feature type="glycosylation site" description="N-linked (GlcNAc...) asparagine" evidence="1">
    <location>
        <position position="167"/>
    </location>
</feature>
<feature type="sequence variant" id="VAR_024186" description="In dbSNP:rs2537817." evidence="2">
    <original>M</original>
    <variation>V</variation>
    <location>
        <position position="308"/>
    </location>
</feature>
<keyword id="KW-0297">G-protein coupled receptor</keyword>
<keyword id="KW-0325">Glycoprotein</keyword>
<keyword id="KW-0472">Membrane</keyword>
<keyword id="KW-0675">Receptor</keyword>
<keyword id="KW-1185">Reference proteome</keyword>
<keyword id="KW-0716">Sensory transduction</keyword>
<keyword id="KW-0919">Taste</keyword>
<keyword id="KW-0807">Transducer</keyword>
<keyword id="KW-0812">Transmembrane</keyword>
<keyword id="KW-1133">Transmembrane helix</keyword>
<name>TA2R8_HUMAN</name>
<comment type="function">
    <text>Receptor that may play a role in the perception of bitterness and is gustducin-linked. May play a role in sensing the chemical composition of the gastrointestinal content. The activity of this receptor may stimulate alpha gustducin, mediate PLC-beta-2 activation and lead to the gating of TRPM5.</text>
</comment>
<comment type="interaction">
    <interactant intactId="EBI-12092809">
        <id>Q9NYW2</id>
    </interactant>
    <interactant intactId="EBI-12092811">
        <id>Q86UT5-3</id>
        <label>NHERF4</label>
    </interactant>
    <organismsDiffer>false</organismsDiffer>
    <experiments>3</experiments>
</comment>
<comment type="subcellular location">
    <subcellularLocation>
        <location>Membrane</location>
        <topology>Multi-pass membrane protein</topology>
    </subcellularLocation>
</comment>
<comment type="tissue specificity">
    <text>Expressed in subsets of taste receptor cells of the tongue and palate epithelium and exclusively in gustducin-positive cells.</text>
</comment>
<comment type="miscellaneous">
    <text>Most taste cells may be activated by a limited number of bitter compounds; individual taste cells can discriminate among bitter stimuli.</text>
</comment>
<comment type="similarity">
    <text evidence="3">Belongs to the G-protein coupled receptor T2R family.</text>
</comment>
<protein>
    <recommendedName>
        <fullName>Taste receptor type 2 member 8</fullName>
        <shortName>T2R8</shortName>
    </recommendedName>
    <alternativeName>
        <fullName>Taste receptor family B member 5</fullName>
        <shortName>TRB5</shortName>
    </alternativeName>
</protein>